<sequence>MSANPLDQFRISTIFKLPDIGEYNIDFTNASLFMVLSTFLISLSCYVGLRKESVIPNPLQSIIEIIYDFIVSTIESNVGKEGLQYVPLVFTIFTFILVCNLLGILPLGFTVTSHIAVTFAISMIVFISVTFIGFKHQGTHFLHILLPQGTPMWLAPMMVLIELFAYCARPVSLSIRLAANMIAGHTIIKVIAGFVINMNIFLTPLPIAFIIILIGFEIFVAILQAYIFTVLTCVYLSDAVNKH</sequence>
<reference key="1">
    <citation type="journal article" date="2005" name="Proc. Natl. Acad. Sci. U.S.A.">
        <title>The genome of the heartwater agent Ehrlichia ruminantium contains multiple tandem repeats of actively variable copy number.</title>
        <authorList>
            <person name="Collins N.E."/>
            <person name="Liebenberg J."/>
            <person name="de Villiers E.P."/>
            <person name="Brayton K.A."/>
            <person name="Louw E."/>
            <person name="Pretorius A."/>
            <person name="Faber F.E."/>
            <person name="van Heerden H."/>
            <person name="Josemans A."/>
            <person name="van Kleef M."/>
            <person name="Steyn H.C."/>
            <person name="van Strijp M.F."/>
            <person name="Zweygarth E."/>
            <person name="Jongejan F."/>
            <person name="Maillard J.C."/>
            <person name="Berthier D."/>
            <person name="Botha M."/>
            <person name="Joubert F."/>
            <person name="Corton C.H."/>
            <person name="Thomson N.R."/>
            <person name="Allsopp M.T."/>
            <person name="Allsopp B.A."/>
        </authorList>
    </citation>
    <scope>NUCLEOTIDE SEQUENCE [LARGE SCALE GENOMIC DNA]</scope>
    <source>
        <strain>Welgevonden</strain>
    </source>
</reference>
<reference key="2">
    <citation type="journal article" date="2006" name="J. Bacteriol.">
        <title>Comparative genomic analysis of three strains of Ehrlichia ruminantium reveals an active process of genome size plasticity.</title>
        <authorList>
            <person name="Frutos R."/>
            <person name="Viari A."/>
            <person name="Ferraz C."/>
            <person name="Morgat A."/>
            <person name="Eychenie S."/>
            <person name="Kandassamy Y."/>
            <person name="Chantal I."/>
            <person name="Bensaid A."/>
            <person name="Coissac E."/>
            <person name="Vachiery N."/>
            <person name="Demaille J."/>
            <person name="Martinez D."/>
        </authorList>
    </citation>
    <scope>NUCLEOTIDE SEQUENCE [LARGE SCALE GENOMIC DNA]</scope>
    <source>
        <strain>Welgevonden</strain>
    </source>
</reference>
<protein>
    <recommendedName>
        <fullName evidence="1">ATP synthase subunit a</fullName>
    </recommendedName>
    <alternativeName>
        <fullName evidence="1">ATP synthase F0 sector subunit a</fullName>
    </alternativeName>
    <alternativeName>
        <fullName evidence="1">F-ATPase subunit 6</fullName>
    </alternativeName>
</protein>
<gene>
    <name evidence="1" type="primary">atpB</name>
    <name type="ordered locus">Erum8360</name>
    <name type="ordered locus">ERWE_CDS_08870</name>
</gene>
<proteinExistence type="inferred from homology"/>
<name>ATP6_EHRRW</name>
<evidence type="ECO:0000255" key="1">
    <source>
        <dbReference type="HAMAP-Rule" id="MF_01393"/>
    </source>
</evidence>
<dbReference type="EMBL" id="CR767821">
    <property type="protein sequence ID" value="CAH58571.1"/>
    <property type="molecule type" value="Genomic_DNA"/>
</dbReference>
<dbReference type="EMBL" id="CR925678">
    <property type="protein sequence ID" value="CAI27381.1"/>
    <property type="molecule type" value="Genomic_DNA"/>
</dbReference>
<dbReference type="RefSeq" id="WP_011155515.1">
    <property type="nucleotide sequence ID" value="NC_005295.2"/>
</dbReference>
<dbReference type="SMR" id="Q5HA45"/>
<dbReference type="GeneID" id="33058232"/>
<dbReference type="KEGG" id="eru:Erum8360"/>
<dbReference type="KEGG" id="erw:ERWE_CDS_08870"/>
<dbReference type="eggNOG" id="COG0356">
    <property type="taxonomic scope" value="Bacteria"/>
</dbReference>
<dbReference type="HOGENOM" id="CLU_041018_0_2_5"/>
<dbReference type="Proteomes" id="UP000001021">
    <property type="component" value="Chromosome"/>
</dbReference>
<dbReference type="GO" id="GO:0005886">
    <property type="term" value="C:plasma membrane"/>
    <property type="evidence" value="ECO:0007669"/>
    <property type="project" value="UniProtKB-SubCell"/>
</dbReference>
<dbReference type="GO" id="GO:0045259">
    <property type="term" value="C:proton-transporting ATP synthase complex"/>
    <property type="evidence" value="ECO:0007669"/>
    <property type="project" value="UniProtKB-KW"/>
</dbReference>
<dbReference type="GO" id="GO:0046933">
    <property type="term" value="F:proton-transporting ATP synthase activity, rotational mechanism"/>
    <property type="evidence" value="ECO:0007669"/>
    <property type="project" value="UniProtKB-UniRule"/>
</dbReference>
<dbReference type="CDD" id="cd00310">
    <property type="entry name" value="ATP-synt_Fo_a_6"/>
    <property type="match status" value="1"/>
</dbReference>
<dbReference type="Gene3D" id="1.20.120.220">
    <property type="entry name" value="ATP synthase, F0 complex, subunit A"/>
    <property type="match status" value="1"/>
</dbReference>
<dbReference type="HAMAP" id="MF_01393">
    <property type="entry name" value="ATP_synth_a_bact"/>
    <property type="match status" value="1"/>
</dbReference>
<dbReference type="InterPro" id="IPR000568">
    <property type="entry name" value="ATP_synth_F0_asu"/>
</dbReference>
<dbReference type="InterPro" id="IPR023011">
    <property type="entry name" value="ATP_synth_F0_asu_AS"/>
</dbReference>
<dbReference type="InterPro" id="IPR045083">
    <property type="entry name" value="ATP_synth_F0_asu_bact/mt"/>
</dbReference>
<dbReference type="InterPro" id="IPR035908">
    <property type="entry name" value="F0_ATP_A_sf"/>
</dbReference>
<dbReference type="NCBIfam" id="TIGR01131">
    <property type="entry name" value="ATP_synt_6_or_A"/>
    <property type="match status" value="1"/>
</dbReference>
<dbReference type="NCBIfam" id="NF004482">
    <property type="entry name" value="PRK05815.2-4"/>
    <property type="match status" value="1"/>
</dbReference>
<dbReference type="PANTHER" id="PTHR11410">
    <property type="entry name" value="ATP SYNTHASE SUBUNIT A"/>
    <property type="match status" value="1"/>
</dbReference>
<dbReference type="PANTHER" id="PTHR11410:SF0">
    <property type="entry name" value="ATP SYNTHASE SUBUNIT A"/>
    <property type="match status" value="1"/>
</dbReference>
<dbReference type="Pfam" id="PF00119">
    <property type="entry name" value="ATP-synt_A"/>
    <property type="match status" value="1"/>
</dbReference>
<dbReference type="PRINTS" id="PR00123">
    <property type="entry name" value="ATPASEA"/>
</dbReference>
<dbReference type="SUPFAM" id="SSF81336">
    <property type="entry name" value="F1F0 ATP synthase subunit A"/>
    <property type="match status" value="1"/>
</dbReference>
<dbReference type="PROSITE" id="PS00449">
    <property type="entry name" value="ATPASE_A"/>
    <property type="match status" value="1"/>
</dbReference>
<feature type="chain" id="PRO_0000362292" description="ATP synthase subunit a">
    <location>
        <begin position="1"/>
        <end position="243"/>
    </location>
</feature>
<feature type="transmembrane region" description="Helical" evidence="1">
    <location>
        <begin position="29"/>
        <end position="49"/>
    </location>
</feature>
<feature type="transmembrane region" description="Helical" evidence="1">
    <location>
        <begin position="54"/>
        <end position="74"/>
    </location>
</feature>
<feature type="transmembrane region" description="Helical" evidence="1">
    <location>
        <begin position="89"/>
        <end position="109"/>
    </location>
</feature>
<feature type="transmembrane region" description="Helical" evidence="1">
    <location>
        <begin position="114"/>
        <end position="134"/>
    </location>
</feature>
<feature type="transmembrane region" description="Helical" evidence="1">
    <location>
        <begin position="141"/>
        <end position="161"/>
    </location>
</feature>
<feature type="transmembrane region" description="Helical" evidence="1">
    <location>
        <begin position="177"/>
        <end position="197"/>
    </location>
</feature>
<feature type="transmembrane region" description="Helical" evidence="1">
    <location>
        <begin position="200"/>
        <end position="220"/>
    </location>
</feature>
<feature type="transmembrane region" description="Helical" evidence="1">
    <location>
        <begin position="221"/>
        <end position="241"/>
    </location>
</feature>
<keyword id="KW-0066">ATP synthesis</keyword>
<keyword id="KW-0997">Cell inner membrane</keyword>
<keyword id="KW-1003">Cell membrane</keyword>
<keyword id="KW-0138">CF(0)</keyword>
<keyword id="KW-0375">Hydrogen ion transport</keyword>
<keyword id="KW-0406">Ion transport</keyword>
<keyword id="KW-0472">Membrane</keyword>
<keyword id="KW-0812">Transmembrane</keyword>
<keyword id="KW-1133">Transmembrane helix</keyword>
<keyword id="KW-0813">Transport</keyword>
<organism>
    <name type="scientific">Ehrlichia ruminantium (strain Welgevonden)</name>
    <dbReference type="NCBI Taxonomy" id="254945"/>
    <lineage>
        <taxon>Bacteria</taxon>
        <taxon>Pseudomonadati</taxon>
        <taxon>Pseudomonadota</taxon>
        <taxon>Alphaproteobacteria</taxon>
        <taxon>Rickettsiales</taxon>
        <taxon>Anaplasmataceae</taxon>
        <taxon>Ehrlichia</taxon>
    </lineage>
</organism>
<comment type="function">
    <text evidence="1">Key component of the proton channel; it plays a direct role in the translocation of protons across the membrane.</text>
</comment>
<comment type="subunit">
    <text evidence="1">F-type ATPases have 2 components, CF(1) - the catalytic core - and CF(0) - the membrane proton channel. CF(1) has five subunits: alpha(3), beta(3), gamma(1), delta(1), epsilon(1). CF(0) has three main subunits: a(1), b(2) and c(9-12). The alpha and beta chains form an alternating ring which encloses part of the gamma chain. CF(1) is attached to CF(0) by a central stalk formed by the gamma and epsilon chains, while a peripheral stalk is formed by the delta and b chains.</text>
</comment>
<comment type="subcellular location">
    <subcellularLocation>
        <location evidence="1">Cell inner membrane</location>
        <topology evidence="1">Multi-pass membrane protein</topology>
    </subcellularLocation>
</comment>
<comment type="similarity">
    <text evidence="1">Belongs to the ATPase A chain family.</text>
</comment>
<accession>Q5HA45</accession>
<accession>Q5FDW7</accession>